<organism>
    <name type="scientific">Cavia porcellus</name>
    <name type="common">Guinea pig</name>
    <dbReference type="NCBI Taxonomy" id="10141"/>
    <lineage>
        <taxon>Eukaryota</taxon>
        <taxon>Metazoa</taxon>
        <taxon>Chordata</taxon>
        <taxon>Craniata</taxon>
        <taxon>Vertebrata</taxon>
        <taxon>Euteleostomi</taxon>
        <taxon>Mammalia</taxon>
        <taxon>Eutheria</taxon>
        <taxon>Euarchontoglires</taxon>
        <taxon>Glires</taxon>
        <taxon>Rodentia</taxon>
        <taxon>Hystricomorpha</taxon>
        <taxon>Caviidae</taxon>
        <taxon>Cavia</taxon>
    </lineage>
</organism>
<comment type="function">
    <molecule>Glucagon</molecule>
    <text evidence="6">Plays a key role in glucose metabolism and homeostasis. Regulates blood glucose by increasing gluconeogenesis and decreasing glycolysis. A counterregulatory hormone of insulin, raises plasma glucose levels in response to insulin-induced hypoglycemia. Plays an important role in initiating and maintaining hyperglycemic conditions in diabetes.</text>
</comment>
<comment type="function">
    <molecule>Glucagon-like peptide 1</molecule>
    <text evidence="6">Potent stimulator of glucose-dependent insulin release. Also stimulates insulin release in response to IL6. Plays important roles on gastric motility and the suppression of plasma glucagon levels. May be involved in the suppression of satiety and stimulation of glucose disposal in peripheral tissues, independent of the actions of insulin. Has growth-promoting activities on intestinal epithelium. May also regulate the hypothalamic pituitary axis (HPA) via effects on LH, TSH, CRH, oxytocin, and vasopressin secretion. Increases islet mass through stimulation of islet neogenesis and pancreatic beta cell proliferation. Inhibits beta cell apoptosis.</text>
</comment>
<comment type="function">
    <molecule>Glucagon-like peptide 2</molecule>
    <text evidence="6">Stimulates intestinal growth and up-regulates villus height in the small intestine, concomitant with increased crypt cell proliferation and decreased enterocyte apoptosis. The gastrointestinal tract, from the stomach to the colon is the principal target for GLP-2 action. Plays a key role in nutrient homeostasis, enhancing nutrient assimilation through enhanced gastrointestinal function, as well as increasing nutrient disposal. Stimulates intestinal glucose transport and decreases mucosal permeability.</text>
</comment>
<comment type="function">
    <molecule>Oxyntomodulin</molecule>
    <text evidence="6">Significantly reduces food intake. Inhibits gastric emptying in humans. Suppression of gastric emptying may lead to increased gastric distension, which may contribute to satiety by causing a sensation of fullness.</text>
</comment>
<comment type="function">
    <molecule>Glicentin</molecule>
    <text evidence="6">May modulate gastric acid secretion and the gastro-pyloro-duodenal activity. May play an important role in intestinal mucosal growth in the early period of life.</text>
</comment>
<comment type="subcellular location">
    <subcellularLocation>
        <location evidence="3">Secreted</location>
    </subcellularLocation>
</comment>
<comment type="subcellular location">
    <molecule>Glucagon-like peptide 1</molecule>
    <subcellularLocation>
        <location evidence="3">Secreted</location>
    </subcellularLocation>
</comment>
<comment type="induction">
    <text evidence="1">Glucagon release is stimulated by hypoglycemia and inhibited by hyperglycemia, insulin, and somatostatin. GLP-1 and GLP-2 are induced in response to nutrient ingestion (By similarity).</text>
</comment>
<comment type="PTM">
    <text evidence="1">Proglucagon is post-translationally processed in a tissue-specific manner in pancreatic A cells and intestinal L cells. In pancreatic A cells, the major bioactive hormone is glucagon cleaved by PCSK2/PC2. In the intestinal L cells PCSK1/PC1 liberates GLP-1, GLP-2, glicentin and oxyntomodulin. GLP-1 is further N-terminally truncated by post-translational processing in the intestinal L cells resulting in GLP-1(7-37) GLP-1-(7-36)amide. The C-terminal amidation is neither important for the metabolism of GLP-1 nor for its effects on the endocrine pancreas (By similarity).</text>
</comment>
<comment type="similarity">
    <text evidence="10">Belongs to the glucagon family.</text>
</comment>
<gene>
    <name type="primary">GCG</name>
</gene>
<evidence type="ECO:0000250" key="1"/>
<evidence type="ECO:0000250" key="2">
    <source>
        <dbReference type="UniProtKB" id="P01274"/>
    </source>
</evidence>
<evidence type="ECO:0000250" key="3">
    <source>
        <dbReference type="UniProtKB" id="P01275"/>
    </source>
</evidence>
<evidence type="ECO:0000250" key="4">
    <source>
        <dbReference type="UniProtKB" id="P09686"/>
    </source>
</evidence>
<evidence type="ECO:0000250" key="5">
    <source>
        <dbReference type="UniProtKB" id="P15438"/>
    </source>
</evidence>
<evidence type="ECO:0000250" key="6">
    <source>
        <dbReference type="UniProtKB" id="P55095"/>
    </source>
</evidence>
<evidence type="ECO:0000256" key="7">
    <source>
        <dbReference type="SAM" id="MobiDB-lite"/>
    </source>
</evidence>
<evidence type="ECO:0000269" key="8">
    <source>
    </source>
</evidence>
<evidence type="ECO:0000269" key="9">
    <source>
    </source>
</evidence>
<evidence type="ECO:0000305" key="10"/>
<name>GLUC_CAVPO</name>
<dbReference type="EMBL" id="D00014">
    <property type="protein sequence ID" value="BAA00010.1"/>
    <property type="molecule type" value="mRNA"/>
</dbReference>
<dbReference type="PIR" id="A24856">
    <property type="entry name" value="GCGP"/>
</dbReference>
<dbReference type="RefSeq" id="NP_001166423.1">
    <property type="nucleotide sequence ID" value="NM_001172952.1"/>
</dbReference>
<dbReference type="BMRB" id="P05110"/>
<dbReference type="FunCoup" id="P05110">
    <property type="interactions" value="589"/>
</dbReference>
<dbReference type="STRING" id="10141.ENSCPOP00000014570"/>
<dbReference type="Ensembl" id="ENSCPOT00000028211.2">
    <property type="protein sequence ID" value="ENSCPOP00000014570.1"/>
    <property type="gene ID" value="ENSCPOG00000024193.2"/>
</dbReference>
<dbReference type="GeneID" id="100135526"/>
<dbReference type="KEGG" id="cpoc:100135526"/>
<dbReference type="CTD" id="2641"/>
<dbReference type="VEuPathDB" id="HostDB:ENSCPOG00000024193"/>
<dbReference type="eggNOG" id="ENOG502RYPR">
    <property type="taxonomic scope" value="Eukaryota"/>
</dbReference>
<dbReference type="GeneTree" id="ENSGT00390000005372"/>
<dbReference type="HOGENOM" id="CLU_090687_0_0_1"/>
<dbReference type="InParanoid" id="P05110"/>
<dbReference type="OMA" id="MNTKRNX"/>
<dbReference type="OrthoDB" id="9904258at2759"/>
<dbReference type="TreeFam" id="TF332333"/>
<dbReference type="Proteomes" id="UP000005447">
    <property type="component" value="Unassembled WGS sequence"/>
</dbReference>
<dbReference type="Bgee" id="ENSCPOG00000024193">
    <property type="expression patterns" value="Expressed in thyroid gland"/>
</dbReference>
<dbReference type="GO" id="GO:0005737">
    <property type="term" value="C:cytoplasm"/>
    <property type="evidence" value="ECO:0007669"/>
    <property type="project" value="Ensembl"/>
</dbReference>
<dbReference type="GO" id="GO:0005615">
    <property type="term" value="C:extracellular space"/>
    <property type="evidence" value="ECO:0000250"/>
    <property type="project" value="UniProtKB"/>
</dbReference>
<dbReference type="GO" id="GO:0005886">
    <property type="term" value="C:plasma membrane"/>
    <property type="evidence" value="ECO:0007669"/>
    <property type="project" value="Ensembl"/>
</dbReference>
<dbReference type="GO" id="GO:0031769">
    <property type="term" value="F:glucagon receptor binding"/>
    <property type="evidence" value="ECO:0007669"/>
    <property type="project" value="TreeGrafter"/>
</dbReference>
<dbReference type="GO" id="GO:0005179">
    <property type="term" value="F:hormone activity"/>
    <property type="evidence" value="ECO:0007669"/>
    <property type="project" value="UniProtKB-KW"/>
</dbReference>
<dbReference type="GO" id="GO:0042802">
    <property type="term" value="F:identical protein binding"/>
    <property type="evidence" value="ECO:0007669"/>
    <property type="project" value="Ensembl"/>
</dbReference>
<dbReference type="GO" id="GO:0007189">
    <property type="term" value="P:adenylate cyclase-activating G protein-coupled receptor signaling pathway"/>
    <property type="evidence" value="ECO:0007669"/>
    <property type="project" value="Ensembl"/>
</dbReference>
<dbReference type="GO" id="GO:0071377">
    <property type="term" value="P:cellular response to glucagon stimulus"/>
    <property type="evidence" value="ECO:0007669"/>
    <property type="project" value="Ensembl"/>
</dbReference>
<dbReference type="GO" id="GO:0006094">
    <property type="term" value="P:gluconeogenesis"/>
    <property type="evidence" value="ECO:0007669"/>
    <property type="project" value="Ensembl"/>
</dbReference>
<dbReference type="GO" id="GO:0042593">
    <property type="term" value="P:glucose homeostasis"/>
    <property type="evidence" value="ECO:0000250"/>
    <property type="project" value="UniProtKB"/>
</dbReference>
<dbReference type="GO" id="GO:1900118">
    <property type="term" value="P:negative regulation of execution phase of apoptosis"/>
    <property type="evidence" value="ECO:0007669"/>
    <property type="project" value="Ensembl"/>
</dbReference>
<dbReference type="GO" id="GO:0090280">
    <property type="term" value="P:positive regulation of calcium ion import"/>
    <property type="evidence" value="ECO:0007669"/>
    <property type="project" value="Ensembl"/>
</dbReference>
<dbReference type="GO" id="GO:0070374">
    <property type="term" value="P:positive regulation of ERK1 and ERK2 cascade"/>
    <property type="evidence" value="ECO:0007669"/>
    <property type="project" value="Ensembl"/>
</dbReference>
<dbReference type="GO" id="GO:0045722">
    <property type="term" value="P:positive regulation of gluconeogenesis"/>
    <property type="evidence" value="ECO:0007669"/>
    <property type="project" value="Ensembl"/>
</dbReference>
<dbReference type="GO" id="GO:0035774">
    <property type="term" value="P:positive regulation of insulin secretion involved in cellular response to glucose stimulus"/>
    <property type="evidence" value="ECO:0007669"/>
    <property type="project" value="Ensembl"/>
</dbReference>
<dbReference type="GO" id="GO:0010737">
    <property type="term" value="P:protein kinase A signaling"/>
    <property type="evidence" value="ECO:0007669"/>
    <property type="project" value="Ensembl"/>
</dbReference>
<dbReference type="GO" id="GO:0050796">
    <property type="term" value="P:regulation of insulin secretion"/>
    <property type="evidence" value="ECO:0000250"/>
    <property type="project" value="UniProtKB"/>
</dbReference>
<dbReference type="GO" id="GO:0014823">
    <property type="term" value="P:response to activity"/>
    <property type="evidence" value="ECO:0000250"/>
    <property type="project" value="UniProtKB"/>
</dbReference>
<dbReference type="Gene3D" id="6.10.250.590">
    <property type="match status" value="3"/>
</dbReference>
<dbReference type="InterPro" id="IPR015550">
    <property type="entry name" value="Glucagon"/>
</dbReference>
<dbReference type="InterPro" id="IPR000532">
    <property type="entry name" value="Glucagon_GIP_secretin_VIP"/>
</dbReference>
<dbReference type="PANTHER" id="PTHR11418">
    <property type="entry name" value="GLUCAGON"/>
    <property type="match status" value="1"/>
</dbReference>
<dbReference type="PANTHER" id="PTHR11418:SF0">
    <property type="entry name" value="PRO-GLUCAGON"/>
    <property type="match status" value="1"/>
</dbReference>
<dbReference type="Pfam" id="PF00123">
    <property type="entry name" value="Hormone_2"/>
    <property type="match status" value="3"/>
</dbReference>
<dbReference type="PRINTS" id="PR00275">
    <property type="entry name" value="GLUCAGON"/>
</dbReference>
<dbReference type="SMART" id="SM00070">
    <property type="entry name" value="GLUCA"/>
    <property type="match status" value="3"/>
</dbReference>
<dbReference type="PROSITE" id="PS00260">
    <property type="entry name" value="GLUCAGON"/>
    <property type="match status" value="4"/>
</dbReference>
<protein>
    <recommendedName>
        <fullName>Pro-glucagon</fullName>
    </recommendedName>
    <component>
        <recommendedName>
            <fullName>Glicentin</fullName>
        </recommendedName>
    </component>
    <component>
        <recommendedName>
            <fullName>Glicentin-related polypeptide</fullName>
            <shortName>GRPP</shortName>
        </recommendedName>
    </component>
    <component>
        <recommendedName>
            <fullName>Oxyntomodulin</fullName>
            <shortName>OXM</shortName>
            <shortName>OXY</shortName>
        </recommendedName>
    </component>
    <component>
        <recommendedName>
            <fullName>Glucagon</fullName>
        </recommendedName>
    </component>
    <component>
        <recommendedName>
            <fullName>Glucagon-like peptide 1</fullName>
            <shortName>GLP-1</shortName>
        </recommendedName>
    </component>
    <component>
        <recommendedName>
            <fullName>Glucagon-like peptide 1(7-37)</fullName>
            <shortName>GLP-1(7-37)</shortName>
        </recommendedName>
    </component>
    <component>
        <recommendedName>
            <fullName>Glucagon-like peptide 1(7-36)</fullName>
            <shortName>GLP-1(7-36)</shortName>
        </recommendedName>
    </component>
    <component>
        <recommendedName>
            <fullName>Glucagon-like peptide 2</fullName>
            <shortName>GLP-2</shortName>
        </recommendedName>
    </component>
</protein>
<accession>P05110</accession>
<reference key="1">
    <citation type="journal article" date="1986" name="FEBS Lett.">
        <title>Mutations in the guinea pig preproglucagon gene are restricted to a specific portion of the prohormone sequence.</title>
        <authorList>
            <person name="Seino S."/>
            <person name="Welsh M."/>
            <person name="Bell G.I."/>
            <person name="Chan S.J."/>
            <person name="Steiner D.F."/>
        </authorList>
    </citation>
    <scope>NUCLEOTIDE SEQUENCE [MRNA]</scope>
</reference>
<reference key="2">
    <citation type="journal article" date="1986" name="Diabetes">
        <title>Guinea pig glucagon differs from other mammalian glucagons.</title>
        <authorList>
            <person name="Huang C.G."/>
            <person name="Eng J."/>
            <person name="Pan Y.-C.E."/>
            <person name="Hulmes J.D."/>
            <person name="Yalow R.S."/>
        </authorList>
    </citation>
    <scope>PROTEIN SEQUENCE OF 53-81</scope>
</reference>
<reference key="3">
    <citation type="journal article" date="1985" name="Regul. Pept.">
        <title>Primary structure of glucagon and a partial sequence of oxyntomodulin (glucagon-37) from the guinea pig.</title>
        <authorList>
            <person name="Conlon J.M."/>
            <person name="Hansen H.F."/>
            <person name="Schwartz T.W."/>
        </authorList>
    </citation>
    <scope>PROTEIN SEQUENCE OF 53-89</scope>
</reference>
<reference key="4">
    <citation type="journal article" date="2003" name="Mol. Endocrinol.">
        <title>Glucagon-like peptides: regulators of cell proliferation, differentiation, and apoptosis.</title>
        <authorList>
            <person name="Drucker D.J."/>
        </authorList>
    </citation>
    <scope>REVIEW</scope>
</reference>
<reference key="5">
    <citation type="journal article" date="2003" name="Am. J. Physiol.">
        <title>Glucagon and regulation of glucose metabolism.</title>
        <authorList>
            <person name="Jiang G."/>
            <person name="Zhang B.B."/>
        </authorList>
    </citation>
    <scope>REVIEW</scope>
</reference>
<reference key="6">
    <citation type="journal article" date="1999" name="Trends Endocrinol. Metab.">
        <title>Glucagon-like peptide 2.</title>
        <authorList>
            <person name="Drucker D.J."/>
        </authorList>
    </citation>
    <scope>REVIEW</scope>
</reference>
<reference key="7">
    <citation type="journal article" date="1999" name="Endocr. Rev.">
        <title>The glucagon-like peptides.</title>
        <authorList>
            <person name="Kieffer T.J."/>
            <person name="Habener J.F."/>
        </authorList>
    </citation>
    <scope>REVIEW</scope>
</reference>
<keyword id="KW-0027">Amidation</keyword>
<keyword id="KW-0165">Cleavage on pair of basic residues</keyword>
<keyword id="KW-0903">Direct protein sequencing</keyword>
<keyword id="KW-0372">Hormone</keyword>
<keyword id="KW-0597">Phosphoprotein</keyword>
<keyword id="KW-1185">Reference proteome</keyword>
<keyword id="KW-0964">Secreted</keyword>
<keyword id="KW-0732">Signal</keyword>
<proteinExistence type="evidence at protein level"/>
<sequence>MKSVYFVAGLFIMLAQGSWQRSLQDTEEKPRSVSASQTDMLDDPDQMNEDKRHSQGTFTSDYSKYLDSRRAQQFLKWLLNVKRNRNNIAKRHDEFERHAEGTFTSDVSSYLEGQAAKEFIAWLVKGRGRRDFPEEVAIVEELGRRHADGSFSDEMNTILDNLATRDFINWLIQTKITDRK</sequence>
<feature type="signal peptide">
    <location>
        <begin position="1"/>
        <end position="20"/>
    </location>
</feature>
<feature type="peptide" id="PRO_0000011243" description="Glicentin" evidence="2">
    <location>
        <begin position="21"/>
        <end position="89"/>
    </location>
</feature>
<feature type="peptide" id="PRO_0000011244" description="Glicentin-related polypeptide" evidence="4">
    <location>
        <begin position="21"/>
        <end position="50"/>
    </location>
</feature>
<feature type="peptide" id="PRO_0000011245" description="Oxyntomodulin" evidence="9">
    <location>
        <begin position="53"/>
        <end position="89"/>
    </location>
</feature>
<feature type="peptide" id="PRO_0000011246" description="Glucagon" evidence="8">
    <location>
        <begin position="53"/>
        <end position="81"/>
    </location>
</feature>
<feature type="propeptide" id="PRO_0000011247" evidence="3">
    <location>
        <begin position="84"/>
        <end position="89"/>
    </location>
</feature>
<feature type="peptide" id="PRO_0000011248" description="Glucagon-like peptide 1" evidence="3">
    <location>
        <begin position="92"/>
        <end position="128"/>
    </location>
</feature>
<feature type="peptide" id="PRO_0000011249" description="Glucagon-like peptide 1(7-37)" evidence="3">
    <location>
        <begin position="98"/>
        <end position="128"/>
    </location>
</feature>
<feature type="peptide" id="PRO_0000011250" description="Glucagon-like peptide 1(7-36)" evidence="3">
    <location>
        <begin position="98"/>
        <end position="127"/>
    </location>
</feature>
<feature type="propeptide" id="PRO_0000011251" evidence="5">
    <location>
        <begin position="131"/>
        <end position="145"/>
    </location>
</feature>
<feature type="peptide" id="PRO_0000011252" description="Glucagon-like peptide 2" evidence="5">
    <location>
        <begin position="146"/>
        <end position="178"/>
    </location>
</feature>
<feature type="region of interest" description="Disordered" evidence="7">
    <location>
        <begin position="23"/>
        <end position="58"/>
    </location>
</feature>
<feature type="site" description="Cleavage; by PCSK2" evidence="1">
    <location>
        <begin position="52"/>
        <end position="53"/>
    </location>
</feature>
<feature type="site" description="Cleavage; by PCSK1 and PCSK2" evidence="1">
    <location>
        <begin position="83"/>
        <end position="84"/>
    </location>
</feature>
<feature type="site" description="Cleavage; by PCSK1" evidence="1">
    <location>
        <begin position="91"/>
        <end position="92"/>
    </location>
</feature>
<feature type="site" description="Cleavage; by PCSK1" evidence="1">
    <location>
        <begin position="97"/>
        <end position="98"/>
    </location>
</feature>
<feature type="site" description="Cleavage; by PCSK1" evidence="1">
    <location>
        <begin position="130"/>
        <end position="131"/>
    </location>
</feature>
<feature type="site" description="Cleavage; by PCSK1" evidence="1">
    <location>
        <begin position="145"/>
        <end position="146"/>
    </location>
</feature>
<feature type="modified residue" description="Phosphoserine" evidence="6">
    <location>
        <position position="54"/>
    </location>
</feature>
<feature type="modified residue" description="Phosphoserine" evidence="6">
    <location>
        <position position="105"/>
    </location>
</feature>
<feature type="modified residue" description="Phosphoserine" evidence="6">
    <location>
        <position position="108"/>
    </location>
</feature>
<feature type="modified residue" description="Arginine amide" evidence="1">
    <location>
        <position position="127"/>
    </location>
</feature>
<feature type="modified residue" description="Phosphoserine" evidence="6">
    <location>
        <position position="150"/>
    </location>
</feature>
<feature type="modified residue" description="Phosphoserine" evidence="6">
    <location>
        <position position="152"/>
    </location>
</feature>